<dbReference type="EMBL" id="AL513382">
    <property type="protein sequence ID" value="CAD02133.1"/>
    <property type="molecule type" value="Genomic_DNA"/>
</dbReference>
<dbReference type="EMBL" id="AE014613">
    <property type="protein sequence ID" value="AAO68761.1"/>
    <property type="molecule type" value="Genomic_DNA"/>
</dbReference>
<dbReference type="RefSeq" id="NP_456288.1">
    <property type="nucleotide sequence ID" value="NC_003198.1"/>
</dbReference>
<dbReference type="RefSeq" id="WP_000174482.1">
    <property type="nucleotide sequence ID" value="NZ_WSUR01000004.1"/>
</dbReference>
<dbReference type="SMR" id="Q8Z6A0"/>
<dbReference type="STRING" id="220341.gene:17585827"/>
<dbReference type="KEGG" id="stt:t1098"/>
<dbReference type="KEGG" id="sty:STY1904"/>
<dbReference type="PATRIC" id="fig|220341.7.peg.1918"/>
<dbReference type="eggNOG" id="COG3017">
    <property type="taxonomic scope" value="Bacteria"/>
</dbReference>
<dbReference type="HOGENOM" id="CLU_092816_1_1_6"/>
<dbReference type="OMA" id="FSSRFEW"/>
<dbReference type="OrthoDB" id="9797618at2"/>
<dbReference type="Proteomes" id="UP000000541">
    <property type="component" value="Chromosome"/>
</dbReference>
<dbReference type="Proteomes" id="UP000002670">
    <property type="component" value="Chromosome"/>
</dbReference>
<dbReference type="GO" id="GO:0009279">
    <property type="term" value="C:cell outer membrane"/>
    <property type="evidence" value="ECO:0007669"/>
    <property type="project" value="UniProtKB-SubCell"/>
</dbReference>
<dbReference type="GO" id="GO:0044874">
    <property type="term" value="P:lipoprotein localization to outer membrane"/>
    <property type="evidence" value="ECO:0007669"/>
    <property type="project" value="UniProtKB-UniRule"/>
</dbReference>
<dbReference type="GO" id="GO:0015031">
    <property type="term" value="P:protein transport"/>
    <property type="evidence" value="ECO:0007669"/>
    <property type="project" value="UniProtKB-KW"/>
</dbReference>
<dbReference type="CDD" id="cd16326">
    <property type="entry name" value="LolB"/>
    <property type="match status" value="1"/>
</dbReference>
<dbReference type="FunFam" id="2.50.20.10:FF:000002">
    <property type="entry name" value="Outer-membrane lipoprotein LolB"/>
    <property type="match status" value="1"/>
</dbReference>
<dbReference type="Gene3D" id="2.50.20.10">
    <property type="entry name" value="Lipoprotein localisation LolA/LolB/LppX"/>
    <property type="match status" value="1"/>
</dbReference>
<dbReference type="HAMAP" id="MF_00233">
    <property type="entry name" value="LolB"/>
    <property type="match status" value="1"/>
</dbReference>
<dbReference type="InterPro" id="IPR029046">
    <property type="entry name" value="LolA/LolB/LppX"/>
</dbReference>
<dbReference type="InterPro" id="IPR004565">
    <property type="entry name" value="OM_lipoprot_LolB"/>
</dbReference>
<dbReference type="NCBIfam" id="TIGR00548">
    <property type="entry name" value="lolB"/>
    <property type="match status" value="1"/>
</dbReference>
<dbReference type="Pfam" id="PF03550">
    <property type="entry name" value="LolB"/>
    <property type="match status" value="1"/>
</dbReference>
<dbReference type="SUPFAM" id="SSF89392">
    <property type="entry name" value="Prokaryotic lipoproteins and lipoprotein localization factors"/>
    <property type="match status" value="1"/>
</dbReference>
<dbReference type="PROSITE" id="PS51257">
    <property type="entry name" value="PROKAR_LIPOPROTEIN"/>
    <property type="match status" value="1"/>
</dbReference>
<name>LOLB_SALTI</name>
<keyword id="KW-0998">Cell outer membrane</keyword>
<keyword id="KW-0143">Chaperone</keyword>
<keyword id="KW-0449">Lipoprotein</keyword>
<keyword id="KW-0472">Membrane</keyword>
<keyword id="KW-0564">Palmitate</keyword>
<keyword id="KW-0653">Protein transport</keyword>
<keyword id="KW-0732">Signal</keyword>
<keyword id="KW-0813">Transport</keyword>
<proteinExistence type="inferred from homology"/>
<comment type="function">
    <text evidence="1">Plays a critical role in the incorporation of lipoproteins in the outer membrane after they are released by the LolA protein.</text>
</comment>
<comment type="subunit">
    <text evidence="1">Monomer.</text>
</comment>
<comment type="subcellular location">
    <subcellularLocation>
        <location evidence="1">Cell outer membrane</location>
        <topology evidence="1">Lipid-anchor</topology>
    </subcellularLocation>
</comment>
<comment type="similarity">
    <text evidence="1">Belongs to the LolB family.</text>
</comment>
<feature type="signal peptide" evidence="1">
    <location>
        <begin position="1"/>
        <end position="21"/>
    </location>
</feature>
<feature type="chain" id="PRO_0000018310" description="Outer-membrane lipoprotein LolB">
    <location>
        <begin position="22"/>
        <end position="207"/>
    </location>
</feature>
<feature type="lipid moiety-binding region" description="N-palmitoyl cysteine" evidence="1">
    <location>
        <position position="22"/>
    </location>
</feature>
<feature type="lipid moiety-binding region" description="S-diacylglycerol cysteine" evidence="1">
    <location>
        <position position="22"/>
    </location>
</feature>
<evidence type="ECO:0000255" key="1">
    <source>
        <dbReference type="HAMAP-Rule" id="MF_00233"/>
    </source>
</evidence>
<organism>
    <name type="scientific">Salmonella typhi</name>
    <dbReference type="NCBI Taxonomy" id="90370"/>
    <lineage>
        <taxon>Bacteria</taxon>
        <taxon>Pseudomonadati</taxon>
        <taxon>Pseudomonadota</taxon>
        <taxon>Gammaproteobacteria</taxon>
        <taxon>Enterobacterales</taxon>
        <taxon>Enterobacteriaceae</taxon>
        <taxon>Salmonella</taxon>
    </lineage>
</organism>
<protein>
    <recommendedName>
        <fullName evidence="1">Outer-membrane lipoprotein LolB</fullName>
    </recommendedName>
</protein>
<sequence>MTLPDFRLIRLLPLASLVLTACTLPGHKGPGKSPDSPQWRQHQQEVRHLNQYQTRGAFAYISDDQKVYARFFWQQTGQDRYRLLLTNPLGSTELELNAQPGNVQLVDNKGQRYTADDAEEMIGKLTGMPIPLNSLRQWILGLPGDATDYKLDDQYRLSEVNYHQDGKNWKVVYGGYDSKTQPAMPANMELSDGSQRIKLKMDNWIVK</sequence>
<gene>
    <name evidence="1" type="primary">lolB</name>
    <name type="synonym">hemM</name>
    <name type="ordered locus">STY1904</name>
    <name type="ordered locus">t1098</name>
</gene>
<reference key="1">
    <citation type="journal article" date="2001" name="Nature">
        <title>Complete genome sequence of a multiple drug resistant Salmonella enterica serovar Typhi CT18.</title>
        <authorList>
            <person name="Parkhill J."/>
            <person name="Dougan G."/>
            <person name="James K.D."/>
            <person name="Thomson N.R."/>
            <person name="Pickard D."/>
            <person name="Wain J."/>
            <person name="Churcher C.M."/>
            <person name="Mungall K.L."/>
            <person name="Bentley S.D."/>
            <person name="Holden M.T.G."/>
            <person name="Sebaihia M."/>
            <person name="Baker S."/>
            <person name="Basham D."/>
            <person name="Brooks K."/>
            <person name="Chillingworth T."/>
            <person name="Connerton P."/>
            <person name="Cronin A."/>
            <person name="Davis P."/>
            <person name="Davies R.M."/>
            <person name="Dowd L."/>
            <person name="White N."/>
            <person name="Farrar J."/>
            <person name="Feltwell T."/>
            <person name="Hamlin N."/>
            <person name="Haque A."/>
            <person name="Hien T.T."/>
            <person name="Holroyd S."/>
            <person name="Jagels K."/>
            <person name="Krogh A."/>
            <person name="Larsen T.S."/>
            <person name="Leather S."/>
            <person name="Moule S."/>
            <person name="O'Gaora P."/>
            <person name="Parry C."/>
            <person name="Quail M.A."/>
            <person name="Rutherford K.M."/>
            <person name="Simmonds M."/>
            <person name="Skelton J."/>
            <person name="Stevens K."/>
            <person name="Whitehead S."/>
            <person name="Barrell B.G."/>
        </authorList>
    </citation>
    <scope>NUCLEOTIDE SEQUENCE [LARGE SCALE GENOMIC DNA]</scope>
    <source>
        <strain>CT18</strain>
    </source>
</reference>
<reference key="2">
    <citation type="journal article" date="2003" name="J. Bacteriol.">
        <title>Comparative genomics of Salmonella enterica serovar Typhi strains Ty2 and CT18.</title>
        <authorList>
            <person name="Deng W."/>
            <person name="Liou S.-R."/>
            <person name="Plunkett G. III"/>
            <person name="Mayhew G.F."/>
            <person name="Rose D.J."/>
            <person name="Burland V."/>
            <person name="Kodoyianni V."/>
            <person name="Schwartz D.C."/>
            <person name="Blattner F.R."/>
        </authorList>
    </citation>
    <scope>NUCLEOTIDE SEQUENCE [LARGE SCALE GENOMIC DNA]</scope>
    <source>
        <strain>ATCC 700931 / Ty2</strain>
    </source>
</reference>
<accession>Q8Z6A0</accession>